<feature type="chain" id="PRO_1000007800" description="5'-nucleotidase SurE">
    <location>
        <begin position="1"/>
        <end position="249"/>
    </location>
</feature>
<feature type="binding site" evidence="1">
    <location>
        <position position="8"/>
    </location>
    <ligand>
        <name>a divalent metal cation</name>
        <dbReference type="ChEBI" id="CHEBI:60240"/>
    </ligand>
</feature>
<feature type="binding site" evidence="1">
    <location>
        <position position="9"/>
    </location>
    <ligand>
        <name>a divalent metal cation</name>
        <dbReference type="ChEBI" id="CHEBI:60240"/>
    </ligand>
</feature>
<feature type="binding site" evidence="1">
    <location>
        <position position="39"/>
    </location>
    <ligand>
        <name>a divalent metal cation</name>
        <dbReference type="ChEBI" id="CHEBI:60240"/>
    </ligand>
</feature>
<feature type="binding site" evidence="1">
    <location>
        <position position="91"/>
    </location>
    <ligand>
        <name>a divalent metal cation</name>
        <dbReference type="ChEBI" id="CHEBI:60240"/>
    </ligand>
</feature>
<protein>
    <recommendedName>
        <fullName evidence="1">5'-nucleotidase SurE</fullName>
        <ecNumber evidence="1">3.1.3.5</ecNumber>
    </recommendedName>
    <alternativeName>
        <fullName evidence="1">Nucleoside 5'-monophosphate phosphohydrolase</fullName>
    </alternativeName>
</protein>
<keyword id="KW-0963">Cytoplasm</keyword>
<keyword id="KW-0378">Hydrolase</keyword>
<keyword id="KW-0479">Metal-binding</keyword>
<keyword id="KW-0547">Nucleotide-binding</keyword>
<keyword id="KW-1185">Reference proteome</keyword>
<reference key="1">
    <citation type="journal article" date="2007" name="Curr. Biol.">
        <title>Reduced genome of the thioautotrophic intracellular symbiont in a deep-sea clam, Calyptogena okutanii.</title>
        <authorList>
            <person name="Kuwahara H."/>
            <person name="Yoshida T."/>
            <person name="Takaki Y."/>
            <person name="Shimamura S."/>
            <person name="Nishi S."/>
            <person name="Harada M."/>
            <person name="Matsuyama K."/>
            <person name="Takishita K."/>
            <person name="Kawato M."/>
            <person name="Uematsu K."/>
            <person name="Fujiwara Y."/>
            <person name="Sato T."/>
            <person name="Kato C."/>
            <person name="Kitagawa M."/>
            <person name="Kato I."/>
            <person name="Maruyama T."/>
        </authorList>
    </citation>
    <scope>NUCLEOTIDE SEQUENCE [LARGE SCALE GENOMIC DNA]</scope>
    <source>
        <strain>HA</strain>
    </source>
</reference>
<dbReference type="EC" id="3.1.3.5" evidence="1"/>
<dbReference type="EMBL" id="AP009247">
    <property type="protein sequence ID" value="BAF61923.1"/>
    <property type="molecule type" value="Genomic_DNA"/>
</dbReference>
<dbReference type="RefSeq" id="WP_011930192.1">
    <property type="nucleotide sequence ID" value="NC_009465.1"/>
</dbReference>
<dbReference type="SMR" id="A5CVV1"/>
<dbReference type="STRING" id="412965.COSY_0817"/>
<dbReference type="KEGG" id="vok:COSY_0817"/>
<dbReference type="eggNOG" id="COG0496">
    <property type="taxonomic scope" value="Bacteria"/>
</dbReference>
<dbReference type="HOGENOM" id="CLU_045192_1_2_6"/>
<dbReference type="OrthoDB" id="9780815at2"/>
<dbReference type="Proteomes" id="UP000000247">
    <property type="component" value="Chromosome"/>
</dbReference>
<dbReference type="GO" id="GO:0005737">
    <property type="term" value="C:cytoplasm"/>
    <property type="evidence" value="ECO:0007669"/>
    <property type="project" value="UniProtKB-SubCell"/>
</dbReference>
<dbReference type="GO" id="GO:0008254">
    <property type="term" value="F:3'-nucleotidase activity"/>
    <property type="evidence" value="ECO:0007669"/>
    <property type="project" value="TreeGrafter"/>
</dbReference>
<dbReference type="GO" id="GO:0008253">
    <property type="term" value="F:5'-nucleotidase activity"/>
    <property type="evidence" value="ECO:0007669"/>
    <property type="project" value="UniProtKB-UniRule"/>
</dbReference>
<dbReference type="GO" id="GO:0004309">
    <property type="term" value="F:exopolyphosphatase activity"/>
    <property type="evidence" value="ECO:0007669"/>
    <property type="project" value="TreeGrafter"/>
</dbReference>
<dbReference type="GO" id="GO:0046872">
    <property type="term" value="F:metal ion binding"/>
    <property type="evidence" value="ECO:0007669"/>
    <property type="project" value="UniProtKB-UniRule"/>
</dbReference>
<dbReference type="GO" id="GO:0000166">
    <property type="term" value="F:nucleotide binding"/>
    <property type="evidence" value="ECO:0007669"/>
    <property type="project" value="UniProtKB-KW"/>
</dbReference>
<dbReference type="FunFam" id="3.40.1210.10:FF:000001">
    <property type="entry name" value="5'/3'-nucleotidase SurE"/>
    <property type="match status" value="1"/>
</dbReference>
<dbReference type="Gene3D" id="3.40.1210.10">
    <property type="entry name" value="Survival protein SurE-like phosphatase/nucleotidase"/>
    <property type="match status" value="1"/>
</dbReference>
<dbReference type="HAMAP" id="MF_00060">
    <property type="entry name" value="SurE"/>
    <property type="match status" value="1"/>
</dbReference>
<dbReference type="InterPro" id="IPR030048">
    <property type="entry name" value="SurE"/>
</dbReference>
<dbReference type="InterPro" id="IPR002828">
    <property type="entry name" value="SurE-like_Pase/nucleotidase"/>
</dbReference>
<dbReference type="InterPro" id="IPR036523">
    <property type="entry name" value="SurE-like_sf"/>
</dbReference>
<dbReference type="NCBIfam" id="NF001489">
    <property type="entry name" value="PRK00346.1-3"/>
    <property type="match status" value="1"/>
</dbReference>
<dbReference type="NCBIfam" id="NF001490">
    <property type="entry name" value="PRK00346.1-4"/>
    <property type="match status" value="1"/>
</dbReference>
<dbReference type="NCBIfam" id="TIGR00087">
    <property type="entry name" value="surE"/>
    <property type="match status" value="1"/>
</dbReference>
<dbReference type="PANTHER" id="PTHR30457">
    <property type="entry name" value="5'-NUCLEOTIDASE SURE"/>
    <property type="match status" value="1"/>
</dbReference>
<dbReference type="PANTHER" id="PTHR30457:SF12">
    <property type="entry name" value="5'_3'-NUCLEOTIDASE SURE"/>
    <property type="match status" value="1"/>
</dbReference>
<dbReference type="Pfam" id="PF01975">
    <property type="entry name" value="SurE"/>
    <property type="match status" value="1"/>
</dbReference>
<dbReference type="SUPFAM" id="SSF64167">
    <property type="entry name" value="SurE-like"/>
    <property type="match status" value="1"/>
</dbReference>
<organism>
    <name type="scientific">Vesicomyosocius okutanii subsp. Calyptogena okutanii (strain HA)</name>
    <dbReference type="NCBI Taxonomy" id="412965"/>
    <lineage>
        <taxon>Bacteria</taxon>
        <taxon>Pseudomonadati</taxon>
        <taxon>Pseudomonadota</taxon>
        <taxon>Gammaproteobacteria</taxon>
        <taxon>Candidatus Pseudothioglobaceae</taxon>
        <taxon>Candidatus Vesicomyosocius</taxon>
    </lineage>
</organism>
<sequence>MKILVSNDDGYQAQGIIELAQSLAQEHEVIVVAPSENKSAASSSLTLDKPLRPIQISNNVYCIDATPSDCVHLALCGFLNEEIDLVVTGINFGANLGDDVIYSGTVAGAIEGRFLGLPSLSISLASWRGQHFKTAGIVIRQLINQISHAHLSYGTVLNINVPDVIFSDIKGFQTTRLGKRHMSEQSVIDKNDSSLYWIGENGKEADNGVGTDFHAITNHYVSITPLQTDLTKYNEINTVSTWLNQIITT</sequence>
<accession>A5CVV1</accession>
<comment type="function">
    <text evidence="1">Nucleotidase that shows phosphatase activity on nucleoside 5'-monophosphates.</text>
</comment>
<comment type="catalytic activity">
    <reaction evidence="1">
        <text>a ribonucleoside 5'-phosphate + H2O = a ribonucleoside + phosphate</text>
        <dbReference type="Rhea" id="RHEA:12484"/>
        <dbReference type="ChEBI" id="CHEBI:15377"/>
        <dbReference type="ChEBI" id="CHEBI:18254"/>
        <dbReference type="ChEBI" id="CHEBI:43474"/>
        <dbReference type="ChEBI" id="CHEBI:58043"/>
        <dbReference type="EC" id="3.1.3.5"/>
    </reaction>
</comment>
<comment type="cofactor">
    <cofactor evidence="1">
        <name>a divalent metal cation</name>
        <dbReference type="ChEBI" id="CHEBI:60240"/>
    </cofactor>
    <text evidence="1">Binds 1 divalent metal cation per subunit.</text>
</comment>
<comment type="subcellular location">
    <subcellularLocation>
        <location evidence="1">Cytoplasm</location>
    </subcellularLocation>
</comment>
<comment type="similarity">
    <text evidence="1">Belongs to the SurE nucleotidase family.</text>
</comment>
<evidence type="ECO:0000255" key="1">
    <source>
        <dbReference type="HAMAP-Rule" id="MF_00060"/>
    </source>
</evidence>
<proteinExistence type="inferred from homology"/>
<name>SURE_VESOH</name>
<gene>
    <name evidence="1" type="primary">surE</name>
    <name type="ordered locus">COSY_0817</name>
</gene>